<accession>Q9BGI0</accession>
<dbReference type="EC" id="2.6.1.19"/>
<dbReference type="EC" id="2.6.1.22"/>
<dbReference type="EMBL" id="AF305692">
    <property type="protein sequence ID" value="AAG59861.1"/>
    <property type="molecule type" value="mRNA"/>
</dbReference>
<dbReference type="SMR" id="Q9BGI0"/>
<dbReference type="FunCoup" id="Q9BGI0">
    <property type="interactions" value="198"/>
</dbReference>
<dbReference type="STRING" id="9913.ENSBTAP00000005280"/>
<dbReference type="BindingDB" id="Q9BGI0"/>
<dbReference type="PaxDb" id="9913-ENSBTAP00000005280"/>
<dbReference type="eggNOG" id="KOG1405">
    <property type="taxonomic scope" value="Eukaryota"/>
</dbReference>
<dbReference type="InParanoid" id="Q9BGI0"/>
<dbReference type="OrthoDB" id="5419315at2759"/>
<dbReference type="Proteomes" id="UP000009136">
    <property type="component" value="Unplaced"/>
</dbReference>
<dbReference type="GO" id="GO:0032144">
    <property type="term" value="C:4-aminobutyrate transaminase complex"/>
    <property type="evidence" value="ECO:0000250"/>
    <property type="project" value="UniProtKB"/>
</dbReference>
<dbReference type="GO" id="GO:0005759">
    <property type="term" value="C:mitochondrial matrix"/>
    <property type="evidence" value="ECO:0007669"/>
    <property type="project" value="UniProtKB-SubCell"/>
</dbReference>
<dbReference type="GO" id="GO:0005739">
    <property type="term" value="C:mitochondrion"/>
    <property type="evidence" value="ECO:0000314"/>
    <property type="project" value="UniProtKB"/>
</dbReference>
<dbReference type="GO" id="GO:0032991">
    <property type="term" value="C:protein-containing complex"/>
    <property type="evidence" value="ECO:0000303"/>
    <property type="project" value="UniProtKB"/>
</dbReference>
<dbReference type="GO" id="GO:0047298">
    <property type="term" value="F:(S)-3-amino-2-methylpropionate transaminase activity"/>
    <property type="evidence" value="ECO:0007669"/>
    <property type="project" value="UniProtKB-EC"/>
</dbReference>
<dbReference type="GO" id="GO:0034386">
    <property type="term" value="F:4-aminobutyrate:2-oxoglutarate transaminase activity"/>
    <property type="evidence" value="ECO:0000315"/>
    <property type="project" value="UniProtKB"/>
</dbReference>
<dbReference type="GO" id="GO:0042802">
    <property type="term" value="F:identical protein binding"/>
    <property type="evidence" value="ECO:0000250"/>
    <property type="project" value="UniProtKB"/>
</dbReference>
<dbReference type="GO" id="GO:0051536">
    <property type="term" value="F:iron-sulfur cluster binding"/>
    <property type="evidence" value="ECO:0007669"/>
    <property type="project" value="UniProtKB-KW"/>
</dbReference>
<dbReference type="GO" id="GO:0046872">
    <property type="term" value="F:metal ion binding"/>
    <property type="evidence" value="ECO:0007669"/>
    <property type="project" value="UniProtKB-KW"/>
</dbReference>
<dbReference type="GO" id="GO:0030170">
    <property type="term" value="F:pyridoxal phosphate binding"/>
    <property type="evidence" value="ECO:0000250"/>
    <property type="project" value="UniProtKB"/>
</dbReference>
<dbReference type="GO" id="GO:0009450">
    <property type="term" value="P:gamma-aminobutyric acid catabolic process"/>
    <property type="evidence" value="ECO:0000315"/>
    <property type="project" value="UniProtKB"/>
</dbReference>
<dbReference type="GO" id="GO:0050877">
    <property type="term" value="P:nervous system process"/>
    <property type="evidence" value="ECO:0000250"/>
    <property type="project" value="UniProtKB"/>
</dbReference>
<dbReference type="CDD" id="cd00610">
    <property type="entry name" value="OAT_like"/>
    <property type="match status" value="1"/>
</dbReference>
<dbReference type="FunFam" id="3.40.640.10:FF:000029">
    <property type="entry name" value="4-aminobutyrate aminotransferase, mitochondrial"/>
    <property type="match status" value="1"/>
</dbReference>
<dbReference type="FunFam" id="3.90.1150.10:FF:000191">
    <property type="entry name" value="4-aminobutyrate aminotransferase, mitochondrial"/>
    <property type="match status" value="2"/>
</dbReference>
<dbReference type="Gene3D" id="3.90.1150.10">
    <property type="entry name" value="Aspartate Aminotransferase, domain 1"/>
    <property type="match status" value="1"/>
</dbReference>
<dbReference type="Gene3D" id="3.40.640.10">
    <property type="entry name" value="Type I PLP-dependent aspartate aminotransferase-like (Major domain)"/>
    <property type="match status" value="1"/>
</dbReference>
<dbReference type="InterPro" id="IPR004631">
    <property type="entry name" value="4NH2But_aminotransferase_euk"/>
</dbReference>
<dbReference type="InterPro" id="IPR005814">
    <property type="entry name" value="Aminotrans_3"/>
</dbReference>
<dbReference type="InterPro" id="IPR015424">
    <property type="entry name" value="PyrdxlP-dep_Trfase"/>
</dbReference>
<dbReference type="InterPro" id="IPR015421">
    <property type="entry name" value="PyrdxlP-dep_Trfase_major"/>
</dbReference>
<dbReference type="InterPro" id="IPR015422">
    <property type="entry name" value="PyrdxlP-dep_Trfase_small"/>
</dbReference>
<dbReference type="NCBIfam" id="TIGR00699">
    <property type="entry name" value="GABAtrns_euk"/>
    <property type="match status" value="1"/>
</dbReference>
<dbReference type="PANTHER" id="PTHR43206:SF1">
    <property type="entry name" value="4-AMINOBUTYRATE AMINOTRANSFERASE, MITOCHONDRIAL"/>
    <property type="match status" value="1"/>
</dbReference>
<dbReference type="PANTHER" id="PTHR43206">
    <property type="entry name" value="AMINOTRANSFERASE"/>
    <property type="match status" value="1"/>
</dbReference>
<dbReference type="Pfam" id="PF00202">
    <property type="entry name" value="Aminotran_3"/>
    <property type="match status" value="1"/>
</dbReference>
<dbReference type="PIRSF" id="PIRSF000521">
    <property type="entry name" value="Transaminase_4ab_Lys_Orn"/>
    <property type="match status" value="1"/>
</dbReference>
<dbReference type="SUPFAM" id="SSF53383">
    <property type="entry name" value="PLP-dependent transferases"/>
    <property type="match status" value="1"/>
</dbReference>
<keyword id="KW-0007">Acetylation</keyword>
<keyword id="KW-0032">Aminotransferase</keyword>
<keyword id="KW-1015">Disulfide bond</keyword>
<keyword id="KW-0408">Iron</keyword>
<keyword id="KW-0411">Iron-sulfur</keyword>
<keyword id="KW-0479">Metal-binding</keyword>
<keyword id="KW-0496">Mitochondrion</keyword>
<keyword id="KW-0531">Neurotransmitter degradation</keyword>
<keyword id="KW-0663">Pyridoxal phosphate</keyword>
<keyword id="KW-1185">Reference proteome</keyword>
<keyword id="KW-0808">Transferase</keyword>
<keyword id="KW-0809">Transit peptide</keyword>
<gene>
    <name type="primary">ABAT</name>
    <name type="synonym">GABAT</name>
</gene>
<organism>
    <name type="scientific">Bos taurus</name>
    <name type="common">Bovine</name>
    <dbReference type="NCBI Taxonomy" id="9913"/>
    <lineage>
        <taxon>Eukaryota</taxon>
        <taxon>Metazoa</taxon>
        <taxon>Chordata</taxon>
        <taxon>Craniata</taxon>
        <taxon>Vertebrata</taxon>
        <taxon>Euteleostomi</taxon>
        <taxon>Mammalia</taxon>
        <taxon>Eutheria</taxon>
        <taxon>Laurasiatheria</taxon>
        <taxon>Artiodactyla</taxon>
        <taxon>Ruminantia</taxon>
        <taxon>Pecora</taxon>
        <taxon>Bovidae</taxon>
        <taxon>Bovinae</taxon>
        <taxon>Bos</taxon>
    </lineage>
</organism>
<sequence>MASMLVAQRLACSFQHSYRLLVPGSRHISQAAAKVDVEFDYDGRLMKTEVPGLRCQELMKQLNIIQNAEAVHFFCNYEESRGNYLVDVDGNRMLDLYSQISSVPIGYSHPGLLKLIQQPQNASMFVNRPALGILLPENFVEKLRQSLLSVAPKGMSQLITMACGSCSNENGLKTIFMWYRSKERGQRGFPQEELETCMINQAPWCPDYSILSFMGAFHGRTMGCLATTHSKAIHKIDIPSFDWPIAPFPRLKYPLEEFVKENQQEEARCLEEVEDLIVKYRKKKKTVAGIIVEPIQSEGGDNHASDDFFRKLRDIPRKQCCAFLVDVVQTGGGCTGKFWAHEHWARDDPEDVMTSSKKMMTGGFFHKEEFRPNAPYRIFNTWLGDPSKNLLLAEVINIIKREDLLNNAAHAGKALLTGLLDLQARYPQFISRVRGRGTFCSFDTPDDSIRNKLILIARNKGVVLGGCGDKSIRFRPTLVFRDHHAHLFLNIFSDILADFK</sequence>
<evidence type="ECO:0000250" key="1"/>
<evidence type="ECO:0000250" key="2">
    <source>
        <dbReference type="UniProtKB" id="P50554"/>
    </source>
</evidence>
<evidence type="ECO:0000250" key="3">
    <source>
        <dbReference type="UniProtKB" id="P61922"/>
    </source>
</evidence>
<evidence type="ECO:0000250" key="4">
    <source>
        <dbReference type="UniProtKB" id="P80147"/>
    </source>
</evidence>
<evidence type="ECO:0000305" key="5"/>
<comment type="function">
    <text evidence="2">Catalyzes the conversion of gamma-aminobutyrate and L-beta-aminoisobutyrate to succinate semialdehyde and methylmalonate semialdehyde, respectively. Can also convert delta-aminovalerate and beta-alanine.</text>
</comment>
<comment type="catalytic activity">
    <reaction evidence="2">
        <text>4-aminobutanoate + 2-oxoglutarate = succinate semialdehyde + L-glutamate</text>
        <dbReference type="Rhea" id="RHEA:23352"/>
        <dbReference type="ChEBI" id="CHEBI:16810"/>
        <dbReference type="ChEBI" id="CHEBI:29985"/>
        <dbReference type="ChEBI" id="CHEBI:57706"/>
        <dbReference type="ChEBI" id="CHEBI:59888"/>
        <dbReference type="EC" id="2.6.1.19"/>
    </reaction>
    <physiologicalReaction direction="left-to-right" evidence="2">
        <dbReference type="Rhea" id="RHEA:23353"/>
    </physiologicalReaction>
</comment>
<comment type="catalytic activity">
    <reaction evidence="2">
        <text>(S)-3-amino-2-methylpropanoate + 2-oxoglutarate = 2-methyl-3-oxopropanoate + L-glutamate</text>
        <dbReference type="Rhea" id="RHEA:13993"/>
        <dbReference type="ChEBI" id="CHEBI:16810"/>
        <dbReference type="ChEBI" id="CHEBI:29985"/>
        <dbReference type="ChEBI" id="CHEBI:57700"/>
        <dbReference type="ChEBI" id="CHEBI:58655"/>
        <dbReference type="EC" id="2.6.1.22"/>
    </reaction>
    <physiologicalReaction direction="left-to-right" evidence="2">
        <dbReference type="Rhea" id="RHEA:13994"/>
    </physiologicalReaction>
</comment>
<comment type="cofactor">
    <cofactor evidence="4">
        <name>pyridoxal 5'-phosphate</name>
        <dbReference type="ChEBI" id="CHEBI:597326"/>
    </cofactor>
    <cofactor evidence="4">
        <name>[2Fe-2S] cluster</name>
        <dbReference type="ChEBI" id="CHEBI:190135"/>
    </cofactor>
    <text evidence="4">Binds 1 [2Fe-2S] cluster per homodimer.</text>
</comment>
<comment type="subunit">
    <text evidence="1">Homodimer; disulfide-linked.</text>
</comment>
<comment type="subcellular location">
    <subcellularLocation>
        <location evidence="1">Mitochondrion matrix</location>
    </subcellularLocation>
</comment>
<comment type="similarity">
    <text evidence="5">Belongs to the class-III pyridoxal-phosphate-dependent aminotransferase family.</text>
</comment>
<feature type="transit peptide" description="Mitochondrion" evidence="1">
    <location>
        <begin position="1"/>
        <end position="28"/>
    </location>
</feature>
<feature type="chain" id="PRO_0000001248" description="4-aminobutyrate aminotransferase, mitochondrial">
    <location>
        <begin position="29"/>
        <end position="500"/>
    </location>
</feature>
<feature type="binding site" evidence="4">
    <location>
        <position position="163"/>
    </location>
    <ligand>
        <name>[2Fe-2S] cluster</name>
        <dbReference type="ChEBI" id="CHEBI:190135"/>
        <note>ligand shared between dimeric partners</note>
    </ligand>
</feature>
<feature type="binding site" description="in other chain" evidence="4">
    <location>
        <begin position="164"/>
        <end position="165"/>
    </location>
    <ligand>
        <name>pyridoxal 5'-phosphate</name>
        <dbReference type="ChEBI" id="CHEBI:597326"/>
        <note>ligand shared between dimeric partners</note>
    </ligand>
</feature>
<feature type="binding site" evidence="4">
    <location>
        <position position="166"/>
    </location>
    <ligand>
        <name>[2Fe-2S] cluster</name>
        <dbReference type="ChEBI" id="CHEBI:190135"/>
        <note>ligand shared between dimeric partners</note>
    </ligand>
</feature>
<feature type="binding site" evidence="4">
    <location>
        <position position="220"/>
    </location>
    <ligand>
        <name>substrate</name>
    </ligand>
</feature>
<feature type="binding site" evidence="4">
    <location>
        <position position="381"/>
    </location>
    <ligand>
        <name>pyridoxal 5'-phosphate</name>
        <dbReference type="ChEBI" id="CHEBI:597326"/>
        <note>ligand shared between dimeric partners</note>
    </ligand>
</feature>
<feature type="modified residue" description="N6-succinyllysine" evidence="3">
    <location>
        <position position="231"/>
    </location>
</feature>
<feature type="modified residue" description="N6-acetyllysine; alternate" evidence="3">
    <location>
        <position position="252"/>
    </location>
</feature>
<feature type="modified residue" description="N6-succinyllysine; alternate" evidence="3">
    <location>
        <position position="252"/>
    </location>
</feature>
<feature type="modified residue" description="N6-acetyllysine" evidence="3">
    <location>
        <position position="279"/>
    </location>
</feature>
<feature type="modified residue" description="N6-acetyllysine" evidence="3">
    <location>
        <position position="318"/>
    </location>
</feature>
<feature type="modified residue" description="N6-(pyridoxal phosphate)lysine" evidence="4">
    <location>
        <position position="357"/>
    </location>
</feature>
<feature type="modified residue" description="N6-acetyllysine; alternate" evidence="3">
    <location>
        <position position="413"/>
    </location>
</feature>
<feature type="modified residue" description="N6-succinyllysine; alternate" evidence="3">
    <location>
        <position position="413"/>
    </location>
</feature>
<feature type="modified residue" description="N6-acetyllysine" evidence="3">
    <location>
        <position position="452"/>
    </location>
</feature>
<feature type="modified residue" description="N6-acetyllysine" evidence="3">
    <location>
        <position position="470"/>
    </location>
</feature>
<feature type="disulfide bond" description="Interchain" evidence="1">
    <location>
        <position position="321"/>
    </location>
</feature>
<proteinExistence type="evidence at transcript level"/>
<reference key="1">
    <citation type="journal article" date="2001" name="Mol. Cells">
        <title>Molecular cloning and functional expression of bovine brain GABA transaminase.</title>
        <authorList>
            <person name="Jeon S.G."/>
            <person name="Bahn J.H."/>
            <person name="Jang J.S."/>
            <person name="Jang S.H."/>
            <person name="Lee B.R."/>
            <person name="Lee K.S."/>
            <person name="Park J."/>
            <person name="Kang T.C."/>
            <person name="Won M.H."/>
            <person name="Kim H.B."/>
            <person name="Kwo O.S."/>
            <person name="Cho S.W."/>
            <person name="Choi S.Y."/>
        </authorList>
    </citation>
    <scope>NUCLEOTIDE SEQUENCE [MRNA]</scope>
    <source>
        <tissue>Brain</tissue>
    </source>
</reference>
<name>GABT_BOVIN</name>
<protein>
    <recommendedName>
        <fullName>4-aminobutyrate aminotransferase, mitochondrial</fullName>
        <ecNumber>2.6.1.19</ecNumber>
    </recommendedName>
    <alternativeName>
        <fullName>(S)-3-amino-2-methylpropionate transaminase</fullName>
        <ecNumber>2.6.1.22</ecNumber>
    </alternativeName>
    <alternativeName>
        <fullName>GABA aminotransferase</fullName>
        <shortName>GABA-AT</shortName>
    </alternativeName>
    <alternativeName>
        <fullName>Gamma-amino-N-butyrate transaminase</fullName>
        <shortName>GABA transaminase</shortName>
        <shortName>GABA-T</shortName>
    </alternativeName>
    <alternativeName>
        <fullName>L-AIBAT</fullName>
    </alternativeName>
</protein>